<protein>
    <recommendedName>
        <fullName evidence="1">Lipoyl synthase</fullName>
        <ecNumber evidence="1">2.8.1.8</ecNumber>
    </recommendedName>
    <alternativeName>
        <fullName evidence="1">Lip-syn</fullName>
        <shortName evidence="1">LS</shortName>
    </alternativeName>
    <alternativeName>
        <fullName evidence="1">Lipoate synthase</fullName>
    </alternativeName>
    <alternativeName>
        <fullName evidence="1">Lipoic acid synthase</fullName>
    </alternativeName>
    <alternativeName>
        <fullName evidence="1">Sulfur insertion protein LipA</fullName>
    </alternativeName>
</protein>
<feature type="chain" id="PRO_0000325323" description="Lipoyl synthase">
    <location>
        <begin position="1"/>
        <end position="296"/>
    </location>
</feature>
<feature type="domain" description="Radical SAM core" evidence="2">
    <location>
        <begin position="46"/>
        <end position="265"/>
    </location>
</feature>
<feature type="binding site" evidence="1">
    <location>
        <position position="34"/>
    </location>
    <ligand>
        <name>[4Fe-4S] cluster</name>
        <dbReference type="ChEBI" id="CHEBI:49883"/>
        <label>1</label>
    </ligand>
</feature>
<feature type="binding site" evidence="1">
    <location>
        <position position="39"/>
    </location>
    <ligand>
        <name>[4Fe-4S] cluster</name>
        <dbReference type="ChEBI" id="CHEBI:49883"/>
        <label>1</label>
    </ligand>
</feature>
<feature type="binding site" evidence="1">
    <location>
        <position position="45"/>
    </location>
    <ligand>
        <name>[4Fe-4S] cluster</name>
        <dbReference type="ChEBI" id="CHEBI:49883"/>
        <label>1</label>
    </ligand>
</feature>
<feature type="binding site" evidence="1">
    <location>
        <position position="60"/>
    </location>
    <ligand>
        <name>[4Fe-4S] cluster</name>
        <dbReference type="ChEBI" id="CHEBI:49883"/>
        <label>2</label>
        <note>4Fe-4S-S-AdoMet</note>
    </ligand>
</feature>
<feature type="binding site" evidence="1">
    <location>
        <position position="64"/>
    </location>
    <ligand>
        <name>[4Fe-4S] cluster</name>
        <dbReference type="ChEBI" id="CHEBI:49883"/>
        <label>2</label>
        <note>4Fe-4S-S-AdoMet</note>
    </ligand>
</feature>
<feature type="binding site" evidence="1">
    <location>
        <position position="67"/>
    </location>
    <ligand>
        <name>[4Fe-4S] cluster</name>
        <dbReference type="ChEBI" id="CHEBI:49883"/>
        <label>2</label>
        <note>4Fe-4S-S-AdoMet</note>
    </ligand>
</feature>
<feature type="binding site" evidence="1">
    <location>
        <position position="276"/>
    </location>
    <ligand>
        <name>[4Fe-4S] cluster</name>
        <dbReference type="ChEBI" id="CHEBI:49883"/>
        <label>1</label>
    </ligand>
</feature>
<dbReference type="EC" id="2.8.1.8" evidence="1"/>
<dbReference type="EMBL" id="CP000660">
    <property type="protein sequence ID" value="ABP50755.1"/>
    <property type="molecule type" value="Genomic_DNA"/>
</dbReference>
<dbReference type="SMR" id="A4WK38"/>
<dbReference type="STRING" id="340102.Pars_1184"/>
<dbReference type="KEGG" id="pas:Pars_1184"/>
<dbReference type="HOGENOM" id="CLU_033144_2_1_2"/>
<dbReference type="OrthoDB" id="145957at2157"/>
<dbReference type="PhylomeDB" id="A4WK38"/>
<dbReference type="UniPathway" id="UPA00538">
    <property type="reaction ID" value="UER00593"/>
</dbReference>
<dbReference type="Proteomes" id="UP000001567">
    <property type="component" value="Chromosome"/>
</dbReference>
<dbReference type="GO" id="GO:0005737">
    <property type="term" value="C:cytoplasm"/>
    <property type="evidence" value="ECO:0007669"/>
    <property type="project" value="UniProtKB-SubCell"/>
</dbReference>
<dbReference type="GO" id="GO:0051539">
    <property type="term" value="F:4 iron, 4 sulfur cluster binding"/>
    <property type="evidence" value="ECO:0007669"/>
    <property type="project" value="UniProtKB-UniRule"/>
</dbReference>
<dbReference type="GO" id="GO:0016992">
    <property type="term" value="F:lipoate synthase activity"/>
    <property type="evidence" value="ECO:0007669"/>
    <property type="project" value="UniProtKB-UniRule"/>
</dbReference>
<dbReference type="GO" id="GO:0046872">
    <property type="term" value="F:metal ion binding"/>
    <property type="evidence" value="ECO:0007669"/>
    <property type="project" value="UniProtKB-KW"/>
</dbReference>
<dbReference type="CDD" id="cd01335">
    <property type="entry name" value="Radical_SAM"/>
    <property type="match status" value="1"/>
</dbReference>
<dbReference type="Gene3D" id="3.20.20.70">
    <property type="entry name" value="Aldolase class I"/>
    <property type="match status" value="1"/>
</dbReference>
<dbReference type="HAMAP" id="MF_00206">
    <property type="entry name" value="Lipoyl_synth"/>
    <property type="match status" value="1"/>
</dbReference>
<dbReference type="InterPro" id="IPR013785">
    <property type="entry name" value="Aldolase_TIM"/>
</dbReference>
<dbReference type="InterPro" id="IPR006638">
    <property type="entry name" value="Elp3/MiaA/NifB-like_rSAM"/>
</dbReference>
<dbReference type="InterPro" id="IPR003698">
    <property type="entry name" value="Lipoyl_synth"/>
</dbReference>
<dbReference type="InterPro" id="IPR007197">
    <property type="entry name" value="rSAM"/>
</dbReference>
<dbReference type="NCBIfam" id="TIGR00510">
    <property type="entry name" value="lipA"/>
    <property type="match status" value="1"/>
</dbReference>
<dbReference type="NCBIfam" id="NF004019">
    <property type="entry name" value="PRK05481.1"/>
    <property type="match status" value="1"/>
</dbReference>
<dbReference type="NCBIfam" id="NF009544">
    <property type="entry name" value="PRK12928.1"/>
    <property type="match status" value="1"/>
</dbReference>
<dbReference type="PANTHER" id="PTHR10949">
    <property type="entry name" value="LIPOYL SYNTHASE"/>
    <property type="match status" value="1"/>
</dbReference>
<dbReference type="PANTHER" id="PTHR10949:SF0">
    <property type="entry name" value="LIPOYL SYNTHASE, MITOCHONDRIAL"/>
    <property type="match status" value="1"/>
</dbReference>
<dbReference type="Pfam" id="PF04055">
    <property type="entry name" value="Radical_SAM"/>
    <property type="match status" value="1"/>
</dbReference>
<dbReference type="PIRSF" id="PIRSF005963">
    <property type="entry name" value="Lipoyl_synth"/>
    <property type="match status" value="1"/>
</dbReference>
<dbReference type="SFLD" id="SFLDF00271">
    <property type="entry name" value="lipoyl_synthase"/>
    <property type="match status" value="1"/>
</dbReference>
<dbReference type="SFLD" id="SFLDS00029">
    <property type="entry name" value="Radical_SAM"/>
    <property type="match status" value="1"/>
</dbReference>
<dbReference type="SMART" id="SM00729">
    <property type="entry name" value="Elp3"/>
    <property type="match status" value="1"/>
</dbReference>
<dbReference type="SUPFAM" id="SSF102114">
    <property type="entry name" value="Radical SAM enzymes"/>
    <property type="match status" value="1"/>
</dbReference>
<dbReference type="PROSITE" id="PS51918">
    <property type="entry name" value="RADICAL_SAM"/>
    <property type="match status" value="1"/>
</dbReference>
<accession>A4WK38</accession>
<sequence>MSALPAWLRVEARSYSEMAKVRSVLSRLGVYTVCEGARCPNVFRCWGEGTATFMILGEVCTRACRFCSVRTGNPRGYVDLDEPRRVAEAVRRLGLRYVVVTSVDRDDLPDGGAFQYASAIREIRRLAPGALVEVLTPDFRGSREAVETVAEAGPDVFAHNVETVRRLTPLVRDRRASYETSLRVLKTAKEVGCRLTKSGIMLGLGESFDEVVEVLDDLRKAEVDIVTIGQYVRPTKSARHLPVARWVPLEEFQKLGEVALSMGFKAVASAPLVRSSYRAEDLYEMALGLRPRAVLV</sequence>
<reference key="1">
    <citation type="submission" date="2007-04" db="EMBL/GenBank/DDBJ databases">
        <title>Complete sequence of Pyrobaculum arsenaticum DSM 13514.</title>
        <authorList>
            <consortium name="US DOE Joint Genome Institute"/>
            <person name="Copeland A."/>
            <person name="Lucas S."/>
            <person name="Lapidus A."/>
            <person name="Barry K."/>
            <person name="Glavina del Rio T."/>
            <person name="Dalin E."/>
            <person name="Tice H."/>
            <person name="Pitluck S."/>
            <person name="Chain P."/>
            <person name="Malfatti S."/>
            <person name="Shin M."/>
            <person name="Vergez L."/>
            <person name="Schmutz J."/>
            <person name="Larimer F."/>
            <person name="Land M."/>
            <person name="Hauser L."/>
            <person name="Kyrpides N."/>
            <person name="Mikhailova N."/>
            <person name="Cozen A.E."/>
            <person name="Fitz-Gibbon S.T."/>
            <person name="House C.H."/>
            <person name="Saltikov C."/>
            <person name="Lowe T.M."/>
            <person name="Richardson P."/>
        </authorList>
    </citation>
    <scope>NUCLEOTIDE SEQUENCE [LARGE SCALE GENOMIC DNA]</scope>
    <source>
        <strain>ATCC 700994 / DSM 13514 / JCM 11321 / PZ6</strain>
    </source>
</reference>
<proteinExistence type="inferred from homology"/>
<organism>
    <name type="scientific">Pyrobaculum arsenaticum (strain DSM 13514 / JCM 11321 / PZ6)</name>
    <dbReference type="NCBI Taxonomy" id="340102"/>
    <lineage>
        <taxon>Archaea</taxon>
        <taxon>Thermoproteota</taxon>
        <taxon>Thermoprotei</taxon>
        <taxon>Thermoproteales</taxon>
        <taxon>Thermoproteaceae</taxon>
        <taxon>Pyrobaculum</taxon>
    </lineage>
</organism>
<evidence type="ECO:0000255" key="1">
    <source>
        <dbReference type="HAMAP-Rule" id="MF_00206"/>
    </source>
</evidence>
<evidence type="ECO:0000255" key="2">
    <source>
        <dbReference type="PROSITE-ProRule" id="PRU01266"/>
    </source>
</evidence>
<comment type="function">
    <text evidence="1">Catalyzes the radical-mediated insertion of two sulfur atoms into the C-6 and C-8 positions of the octanoyl moiety bound to the lipoyl domains of lipoate-dependent enzymes, thereby converting the octanoylated domains into lipoylated derivatives.</text>
</comment>
<comment type="catalytic activity">
    <reaction evidence="1">
        <text>[[Fe-S] cluster scaffold protein carrying a second [4Fe-4S](2+) cluster] + N(6)-octanoyl-L-lysyl-[protein] + 2 oxidized [2Fe-2S]-[ferredoxin] + 2 S-adenosyl-L-methionine + 4 H(+) = [[Fe-S] cluster scaffold protein] + N(6)-[(R)-dihydrolipoyl]-L-lysyl-[protein] + 4 Fe(3+) + 2 hydrogen sulfide + 2 5'-deoxyadenosine + 2 L-methionine + 2 reduced [2Fe-2S]-[ferredoxin]</text>
        <dbReference type="Rhea" id="RHEA:16585"/>
        <dbReference type="Rhea" id="RHEA-COMP:9928"/>
        <dbReference type="Rhea" id="RHEA-COMP:10000"/>
        <dbReference type="Rhea" id="RHEA-COMP:10001"/>
        <dbReference type="Rhea" id="RHEA-COMP:10475"/>
        <dbReference type="Rhea" id="RHEA-COMP:14568"/>
        <dbReference type="Rhea" id="RHEA-COMP:14569"/>
        <dbReference type="ChEBI" id="CHEBI:15378"/>
        <dbReference type="ChEBI" id="CHEBI:17319"/>
        <dbReference type="ChEBI" id="CHEBI:29034"/>
        <dbReference type="ChEBI" id="CHEBI:29919"/>
        <dbReference type="ChEBI" id="CHEBI:33722"/>
        <dbReference type="ChEBI" id="CHEBI:33737"/>
        <dbReference type="ChEBI" id="CHEBI:33738"/>
        <dbReference type="ChEBI" id="CHEBI:57844"/>
        <dbReference type="ChEBI" id="CHEBI:59789"/>
        <dbReference type="ChEBI" id="CHEBI:78809"/>
        <dbReference type="ChEBI" id="CHEBI:83100"/>
        <dbReference type="EC" id="2.8.1.8"/>
    </reaction>
</comment>
<comment type="cofactor">
    <cofactor evidence="1">
        <name>[4Fe-4S] cluster</name>
        <dbReference type="ChEBI" id="CHEBI:49883"/>
    </cofactor>
    <text evidence="1">Binds 2 [4Fe-4S] clusters per subunit. One cluster is coordinated with 3 cysteines and an exchangeable S-adenosyl-L-methionine.</text>
</comment>
<comment type="pathway">
    <text evidence="1">Protein modification; protein lipoylation via endogenous pathway; protein N(6)-(lipoyl)lysine from octanoyl-[acyl-carrier-protein]: step 2/2.</text>
</comment>
<comment type="subcellular location">
    <subcellularLocation>
        <location evidence="1">Cytoplasm</location>
    </subcellularLocation>
</comment>
<comment type="similarity">
    <text evidence="1">Belongs to the radical SAM superfamily. Lipoyl synthase family.</text>
</comment>
<name>LIPA_PYRAR</name>
<keyword id="KW-0004">4Fe-4S</keyword>
<keyword id="KW-0963">Cytoplasm</keyword>
<keyword id="KW-0408">Iron</keyword>
<keyword id="KW-0411">Iron-sulfur</keyword>
<keyword id="KW-0479">Metal-binding</keyword>
<keyword id="KW-0949">S-adenosyl-L-methionine</keyword>
<keyword id="KW-0808">Transferase</keyword>
<gene>
    <name evidence="1" type="primary">lipA</name>
    <name type="ordered locus">Pars_1184</name>
</gene>